<feature type="chain" id="PRO_0000300819" description="Pseudouridylate synthase RPUSD2">
    <location>
        <begin position="1"/>
        <end position="545"/>
    </location>
</feature>
<feature type="region of interest" description="Disordered" evidence="3">
    <location>
        <begin position="48"/>
        <end position="121"/>
    </location>
</feature>
<feature type="active site" evidence="1">
    <location>
        <position position="274"/>
    </location>
</feature>
<feature type="modified residue" description="Phosphoserine" evidence="10 11">
    <location>
        <position position="68"/>
    </location>
</feature>
<feature type="modified residue" description="Phosphothreonine" evidence="2">
    <location>
        <position position="477"/>
    </location>
</feature>
<feature type="splice variant" id="VSP_055372" description="In isoform 2." evidence="6">
    <location>
        <begin position="141"/>
        <end position="201"/>
    </location>
</feature>
<feature type="sequence conflict" description="In Ref. 4; AAB07777." evidence="8" ref="4">
    <original>R</original>
    <variation>L</variation>
    <location>
        <position position="336"/>
    </location>
</feature>
<feature type="sequence conflict" description="In Ref. 4; AAB07777." evidence="8" ref="4">
    <original>N</original>
    <variation>H</variation>
    <location>
        <position position="492"/>
    </location>
</feature>
<feature type="sequence conflict" description="In Ref. 4; AAB07777." evidence="8" ref="4">
    <original>C</original>
    <variation>S</variation>
    <location>
        <position position="499"/>
    </location>
</feature>
<comment type="function">
    <text evidence="4 5">Pseudouridine synthase that catalyzes pseudouridylation of mRNAs.</text>
</comment>
<comment type="catalytic activity">
    <reaction evidence="4 5">
        <text>a uridine in mRNA = a pseudouridine in mRNA</text>
        <dbReference type="Rhea" id="RHEA:56644"/>
        <dbReference type="Rhea" id="RHEA-COMP:14658"/>
        <dbReference type="Rhea" id="RHEA-COMP:14659"/>
        <dbReference type="ChEBI" id="CHEBI:65314"/>
        <dbReference type="ChEBI" id="CHEBI:65315"/>
    </reaction>
</comment>
<comment type="alternative products">
    <event type="alternative splicing"/>
    <isoform>
        <id>Q8IZ73-1</id>
        <name>1</name>
        <sequence type="displayed"/>
    </isoform>
    <isoform>
        <id>Q8IZ73-2</id>
        <name>2</name>
        <sequence type="described" ref="VSP_055372"/>
    </isoform>
</comment>
<comment type="similarity">
    <text evidence="8">Belongs to the pseudouridine synthase RluA family.</text>
</comment>
<comment type="sequence caution" evidence="8">
    <conflict type="frameshift">
        <sequence resource="EMBL-CDS" id="AAB07777"/>
    </conflict>
</comment>
<name>RUSD2_HUMAN</name>
<keyword id="KW-0025">Alternative splicing</keyword>
<keyword id="KW-0413">Isomerase</keyword>
<keyword id="KW-0507">mRNA processing</keyword>
<keyword id="KW-0597">Phosphoprotein</keyword>
<keyword id="KW-1267">Proteomics identification</keyword>
<keyword id="KW-1185">Reference proteome</keyword>
<proteinExistence type="evidence at protein level"/>
<evidence type="ECO:0000250" key="1">
    <source>
        <dbReference type="UniProtKB" id="P0AA37"/>
    </source>
</evidence>
<evidence type="ECO:0000250" key="2">
    <source>
        <dbReference type="UniProtKB" id="Q149F1"/>
    </source>
</evidence>
<evidence type="ECO:0000256" key="3">
    <source>
        <dbReference type="SAM" id="MobiDB-lite"/>
    </source>
</evidence>
<evidence type="ECO:0000269" key="4">
    <source>
    </source>
</evidence>
<evidence type="ECO:0000269" key="5">
    <source>
    </source>
</evidence>
<evidence type="ECO:0000303" key="6">
    <source>
    </source>
</evidence>
<evidence type="ECO:0000303" key="7">
    <source>
    </source>
</evidence>
<evidence type="ECO:0000305" key="8"/>
<evidence type="ECO:0000312" key="9">
    <source>
        <dbReference type="HGNC" id="HGNC:24180"/>
    </source>
</evidence>
<evidence type="ECO:0007744" key="10">
    <source>
    </source>
</evidence>
<evidence type="ECO:0007744" key="11">
    <source>
    </source>
</evidence>
<protein>
    <recommendedName>
        <fullName evidence="8">Pseudouridylate synthase RPUSD2</fullName>
        <ecNumber evidence="4 5">5.4.99.-</ecNumber>
    </recommendedName>
    <alternativeName>
        <fullName evidence="8">RNA pseudouridylate synthase domain-containing protein 2</fullName>
    </alternativeName>
</protein>
<reference key="1">
    <citation type="journal article" date="2004" name="Nat. Genet.">
        <title>Complete sequencing and characterization of 21,243 full-length human cDNAs.</title>
        <authorList>
            <person name="Ota T."/>
            <person name="Suzuki Y."/>
            <person name="Nishikawa T."/>
            <person name="Otsuki T."/>
            <person name="Sugiyama T."/>
            <person name="Irie R."/>
            <person name="Wakamatsu A."/>
            <person name="Hayashi K."/>
            <person name="Sato H."/>
            <person name="Nagai K."/>
            <person name="Kimura K."/>
            <person name="Makita H."/>
            <person name="Sekine M."/>
            <person name="Obayashi M."/>
            <person name="Nishi T."/>
            <person name="Shibahara T."/>
            <person name="Tanaka T."/>
            <person name="Ishii S."/>
            <person name="Yamamoto J."/>
            <person name="Saito K."/>
            <person name="Kawai Y."/>
            <person name="Isono Y."/>
            <person name="Nakamura Y."/>
            <person name="Nagahari K."/>
            <person name="Murakami K."/>
            <person name="Yasuda T."/>
            <person name="Iwayanagi T."/>
            <person name="Wagatsuma M."/>
            <person name="Shiratori A."/>
            <person name="Sudo H."/>
            <person name="Hosoiri T."/>
            <person name="Kaku Y."/>
            <person name="Kodaira H."/>
            <person name="Kondo H."/>
            <person name="Sugawara M."/>
            <person name="Takahashi M."/>
            <person name="Kanda K."/>
            <person name="Yokoi T."/>
            <person name="Furuya T."/>
            <person name="Kikkawa E."/>
            <person name="Omura Y."/>
            <person name="Abe K."/>
            <person name="Kamihara K."/>
            <person name="Katsuta N."/>
            <person name="Sato K."/>
            <person name="Tanikawa M."/>
            <person name="Yamazaki M."/>
            <person name="Ninomiya K."/>
            <person name="Ishibashi T."/>
            <person name="Yamashita H."/>
            <person name="Murakawa K."/>
            <person name="Fujimori K."/>
            <person name="Tanai H."/>
            <person name="Kimata M."/>
            <person name="Watanabe M."/>
            <person name="Hiraoka S."/>
            <person name="Chiba Y."/>
            <person name="Ishida S."/>
            <person name="Ono Y."/>
            <person name="Takiguchi S."/>
            <person name="Watanabe S."/>
            <person name="Yosida M."/>
            <person name="Hotuta T."/>
            <person name="Kusano J."/>
            <person name="Kanehori K."/>
            <person name="Takahashi-Fujii A."/>
            <person name="Hara H."/>
            <person name="Tanase T.-O."/>
            <person name="Nomura Y."/>
            <person name="Togiya S."/>
            <person name="Komai F."/>
            <person name="Hara R."/>
            <person name="Takeuchi K."/>
            <person name="Arita M."/>
            <person name="Imose N."/>
            <person name="Musashino K."/>
            <person name="Yuuki H."/>
            <person name="Oshima A."/>
            <person name="Sasaki N."/>
            <person name="Aotsuka S."/>
            <person name="Yoshikawa Y."/>
            <person name="Matsunawa H."/>
            <person name="Ichihara T."/>
            <person name="Shiohata N."/>
            <person name="Sano S."/>
            <person name="Moriya S."/>
            <person name="Momiyama H."/>
            <person name="Satoh N."/>
            <person name="Takami S."/>
            <person name="Terashima Y."/>
            <person name="Suzuki O."/>
            <person name="Nakagawa S."/>
            <person name="Senoh A."/>
            <person name="Mizoguchi H."/>
            <person name="Goto Y."/>
            <person name="Shimizu F."/>
            <person name="Wakebe H."/>
            <person name="Hishigaki H."/>
            <person name="Watanabe T."/>
            <person name="Sugiyama A."/>
            <person name="Takemoto M."/>
            <person name="Kawakami B."/>
            <person name="Yamazaki M."/>
            <person name="Watanabe K."/>
            <person name="Kumagai A."/>
            <person name="Itakura S."/>
            <person name="Fukuzumi Y."/>
            <person name="Fujimori Y."/>
            <person name="Komiyama M."/>
            <person name="Tashiro H."/>
            <person name="Tanigami A."/>
            <person name="Fujiwara T."/>
            <person name="Ono T."/>
            <person name="Yamada K."/>
            <person name="Fujii Y."/>
            <person name="Ozaki K."/>
            <person name="Hirao M."/>
            <person name="Ohmori Y."/>
            <person name="Kawabata A."/>
            <person name="Hikiji T."/>
            <person name="Kobatake N."/>
            <person name="Inagaki H."/>
            <person name="Ikema Y."/>
            <person name="Okamoto S."/>
            <person name="Okitani R."/>
            <person name="Kawakami T."/>
            <person name="Noguchi S."/>
            <person name="Itoh T."/>
            <person name="Shigeta K."/>
            <person name="Senba T."/>
            <person name="Matsumura K."/>
            <person name="Nakajima Y."/>
            <person name="Mizuno T."/>
            <person name="Morinaga M."/>
            <person name="Sasaki M."/>
            <person name="Togashi T."/>
            <person name="Oyama M."/>
            <person name="Hata H."/>
            <person name="Watanabe M."/>
            <person name="Komatsu T."/>
            <person name="Mizushima-Sugano J."/>
            <person name="Satoh T."/>
            <person name="Shirai Y."/>
            <person name="Takahashi Y."/>
            <person name="Nakagawa K."/>
            <person name="Okumura K."/>
            <person name="Nagase T."/>
            <person name="Nomura N."/>
            <person name="Kikuchi H."/>
            <person name="Masuho Y."/>
            <person name="Yamashita R."/>
            <person name="Nakai K."/>
            <person name="Yada T."/>
            <person name="Nakamura Y."/>
            <person name="Ohara O."/>
            <person name="Isogai T."/>
            <person name="Sugano S."/>
        </authorList>
    </citation>
    <scope>NUCLEOTIDE SEQUENCE [LARGE SCALE MRNA] (ISOFORMS 1 AND 2)</scope>
</reference>
<reference key="2">
    <citation type="journal article" date="2006" name="Nature">
        <title>Analysis of the DNA sequence and duplication history of human chromosome 15.</title>
        <authorList>
            <person name="Zody M.C."/>
            <person name="Garber M."/>
            <person name="Sharpe T."/>
            <person name="Young S.K."/>
            <person name="Rowen L."/>
            <person name="O'Neill K."/>
            <person name="Whittaker C.A."/>
            <person name="Kamal M."/>
            <person name="Chang J.L."/>
            <person name="Cuomo C.A."/>
            <person name="Dewar K."/>
            <person name="FitzGerald M.G."/>
            <person name="Kodira C.D."/>
            <person name="Madan A."/>
            <person name="Qin S."/>
            <person name="Yang X."/>
            <person name="Abbasi N."/>
            <person name="Abouelleil A."/>
            <person name="Arachchi H.M."/>
            <person name="Baradarani L."/>
            <person name="Birditt B."/>
            <person name="Bloom S."/>
            <person name="Bloom T."/>
            <person name="Borowsky M.L."/>
            <person name="Burke J."/>
            <person name="Butler J."/>
            <person name="Cook A."/>
            <person name="DeArellano K."/>
            <person name="DeCaprio D."/>
            <person name="Dorris L. III"/>
            <person name="Dors M."/>
            <person name="Eichler E.E."/>
            <person name="Engels R."/>
            <person name="Fahey J."/>
            <person name="Fleetwood P."/>
            <person name="Friedman C."/>
            <person name="Gearin G."/>
            <person name="Hall J.L."/>
            <person name="Hensley G."/>
            <person name="Johnson E."/>
            <person name="Jones C."/>
            <person name="Kamat A."/>
            <person name="Kaur A."/>
            <person name="Locke D.P."/>
            <person name="Madan A."/>
            <person name="Munson G."/>
            <person name="Jaffe D.B."/>
            <person name="Lui A."/>
            <person name="Macdonald P."/>
            <person name="Mauceli E."/>
            <person name="Naylor J.W."/>
            <person name="Nesbitt R."/>
            <person name="Nicol R."/>
            <person name="O'Leary S.B."/>
            <person name="Ratcliffe A."/>
            <person name="Rounsley S."/>
            <person name="She X."/>
            <person name="Sneddon K.M.B."/>
            <person name="Stewart S."/>
            <person name="Sougnez C."/>
            <person name="Stone S.M."/>
            <person name="Topham K."/>
            <person name="Vincent D."/>
            <person name="Wang S."/>
            <person name="Zimmer A.R."/>
            <person name="Birren B.W."/>
            <person name="Hood L."/>
            <person name="Lander E.S."/>
            <person name="Nusbaum C."/>
        </authorList>
    </citation>
    <scope>NUCLEOTIDE SEQUENCE [LARGE SCALE GENOMIC DNA]</scope>
</reference>
<reference key="3">
    <citation type="journal article" date="2004" name="Genome Res.">
        <title>The status, quality, and expansion of the NIH full-length cDNA project: the Mammalian Gene Collection (MGC).</title>
        <authorList>
            <consortium name="The MGC Project Team"/>
        </authorList>
    </citation>
    <scope>NUCLEOTIDE SEQUENCE [LARGE SCALE MRNA] (ISOFORM 1)</scope>
    <source>
        <tissue>Lymph</tissue>
    </source>
</reference>
<reference key="4">
    <citation type="submission" date="1996-08" db="EMBL/GenBank/DDBJ databases">
        <authorList>
            <person name="Sampson M."/>
            <person name="McClendon D."/>
            <person name="Wiley K."/>
            <person name="Barlow C."/>
        </authorList>
    </citation>
    <scope>NUCLEOTIDE SEQUENCE [GENOMIC DNA] OF 334-545</scope>
    <source>
        <tissue>Lung</tissue>
    </source>
</reference>
<reference key="5">
    <citation type="journal article" date="2008" name="Proc. Natl. Acad. Sci. U.S.A.">
        <title>A quantitative atlas of mitotic phosphorylation.</title>
        <authorList>
            <person name="Dephoure N."/>
            <person name="Zhou C."/>
            <person name="Villen J."/>
            <person name="Beausoleil S.A."/>
            <person name="Bakalarski C.E."/>
            <person name="Elledge S.J."/>
            <person name="Gygi S.P."/>
        </authorList>
    </citation>
    <scope>IDENTIFICATION BY MASS SPECTROMETRY [LARGE SCALE ANALYSIS]</scope>
    <source>
        <tissue>Cervix carcinoma</tissue>
    </source>
</reference>
<reference key="6">
    <citation type="journal article" date="2010" name="Sci. Signal.">
        <title>Quantitative phosphoproteomics reveals widespread full phosphorylation site occupancy during mitosis.</title>
        <authorList>
            <person name="Olsen J.V."/>
            <person name="Vermeulen M."/>
            <person name="Santamaria A."/>
            <person name="Kumar C."/>
            <person name="Miller M.L."/>
            <person name="Jensen L.J."/>
            <person name="Gnad F."/>
            <person name="Cox J."/>
            <person name="Jensen T.S."/>
            <person name="Nigg E.A."/>
            <person name="Brunak S."/>
            <person name="Mann M."/>
        </authorList>
    </citation>
    <scope>PHOSPHORYLATION [LARGE SCALE ANALYSIS] AT SER-68</scope>
    <scope>IDENTIFICATION BY MASS SPECTROMETRY [LARGE SCALE ANALYSIS]</scope>
    <source>
        <tissue>Cervix carcinoma</tissue>
    </source>
</reference>
<reference key="7">
    <citation type="journal article" date="2011" name="BMC Syst. Biol.">
        <title>Initial characterization of the human central proteome.</title>
        <authorList>
            <person name="Burkard T.R."/>
            <person name="Planyavsky M."/>
            <person name="Kaupe I."/>
            <person name="Breitwieser F.P."/>
            <person name="Buerckstuemmer T."/>
            <person name="Bennett K.L."/>
            <person name="Superti-Furga G."/>
            <person name="Colinge J."/>
        </authorList>
    </citation>
    <scope>IDENTIFICATION BY MASS SPECTROMETRY [LARGE SCALE ANALYSIS]</scope>
</reference>
<reference key="8">
    <citation type="journal article" date="2013" name="J. Proteome Res.">
        <title>Toward a comprehensive characterization of a human cancer cell phosphoproteome.</title>
        <authorList>
            <person name="Zhou H."/>
            <person name="Di Palma S."/>
            <person name="Preisinger C."/>
            <person name="Peng M."/>
            <person name="Polat A.N."/>
            <person name="Heck A.J."/>
            <person name="Mohammed S."/>
        </authorList>
    </citation>
    <scope>PHOSPHORYLATION [LARGE SCALE ANALYSIS] AT SER-68</scope>
    <scope>IDENTIFICATION BY MASS SPECTROMETRY [LARGE SCALE ANALYSIS]</scope>
    <source>
        <tissue>Cervix carcinoma</tissue>
        <tissue>Erythroleukemia</tissue>
    </source>
</reference>
<reference key="9">
    <citation type="journal article" date="2019" name="Nat. Chem. Biol.">
        <title>mRNA structure determines modification by pseudouridine synthase 1.</title>
        <authorList>
            <person name="Carlile T.M."/>
            <person name="Martinez N.M."/>
            <person name="Schaening C."/>
            <person name="Su A."/>
            <person name="Bell T.A."/>
            <person name="Zinshteyn B."/>
            <person name="Gilbert W.V."/>
        </authorList>
    </citation>
    <scope>FUNCTION</scope>
    <scope>CATALYTIC ACTIVITY</scope>
</reference>
<reference key="10">
    <citation type="journal article" date="2022" name="Mol. Cell">
        <title>Pseudouridine synthases modify human pre-mRNA co-transcriptionally and affect pre-mRNA processing.</title>
        <authorList>
            <person name="Martinez N.M."/>
            <person name="Su A."/>
            <person name="Burns M.C."/>
            <person name="Nussbacher J.K."/>
            <person name="Schaening C."/>
            <person name="Sathe S."/>
            <person name="Yeo G.W."/>
            <person name="Gilbert W.V."/>
        </authorList>
    </citation>
    <scope>FUNCTION</scope>
    <scope>CATALYTIC ACTIVITY</scope>
</reference>
<organism>
    <name type="scientific">Homo sapiens</name>
    <name type="common">Human</name>
    <dbReference type="NCBI Taxonomy" id="9606"/>
    <lineage>
        <taxon>Eukaryota</taxon>
        <taxon>Metazoa</taxon>
        <taxon>Chordata</taxon>
        <taxon>Craniata</taxon>
        <taxon>Vertebrata</taxon>
        <taxon>Euteleostomi</taxon>
        <taxon>Mammalia</taxon>
        <taxon>Eutheria</taxon>
        <taxon>Euarchontoglires</taxon>
        <taxon>Primates</taxon>
        <taxon>Haplorrhini</taxon>
        <taxon>Catarrhini</taxon>
        <taxon>Hominidae</taxon>
        <taxon>Homo</taxon>
    </lineage>
</organism>
<dbReference type="EC" id="5.4.99.-" evidence="4 5"/>
<dbReference type="EMBL" id="AK055971">
    <property type="protein sequence ID" value="BAB71059.1"/>
    <property type="molecule type" value="mRNA"/>
</dbReference>
<dbReference type="EMBL" id="AK293145">
    <property type="protein sequence ID" value="BAG56692.1"/>
    <property type="molecule type" value="mRNA"/>
</dbReference>
<dbReference type="EMBL" id="AC091045">
    <property type="status" value="NOT_ANNOTATED_CDS"/>
    <property type="molecule type" value="Genomic_DNA"/>
</dbReference>
<dbReference type="EMBL" id="BC007697">
    <property type="protein sequence ID" value="AAH07697.1"/>
    <property type="molecule type" value="mRNA"/>
</dbReference>
<dbReference type="EMBL" id="BC016967">
    <property type="protein sequence ID" value="AAH16967.2"/>
    <property type="molecule type" value="mRNA"/>
</dbReference>
<dbReference type="EMBL" id="U67934">
    <property type="protein sequence ID" value="AAB07777.1"/>
    <property type="status" value="ALT_FRAME"/>
    <property type="molecule type" value="Genomic_DNA"/>
</dbReference>
<dbReference type="CCDS" id="CCDS10061.1">
    <molecule id="Q8IZ73-1"/>
</dbReference>
<dbReference type="CCDS" id="CCDS66737.1">
    <molecule id="Q8IZ73-2"/>
</dbReference>
<dbReference type="RefSeq" id="NP_001273336.1">
    <molecule id="Q8IZ73-2"/>
    <property type="nucleotide sequence ID" value="NM_001286407.2"/>
</dbReference>
<dbReference type="RefSeq" id="NP_689473.1">
    <molecule id="Q8IZ73-1"/>
    <property type="nucleotide sequence ID" value="NM_152260.3"/>
</dbReference>
<dbReference type="SMR" id="Q8IZ73"/>
<dbReference type="BioGRID" id="117987">
    <property type="interactions" value="35"/>
</dbReference>
<dbReference type="FunCoup" id="Q8IZ73">
    <property type="interactions" value="282"/>
</dbReference>
<dbReference type="IntAct" id="Q8IZ73">
    <property type="interactions" value="12"/>
</dbReference>
<dbReference type="MINT" id="Q8IZ73"/>
<dbReference type="STRING" id="9606.ENSP00000323288"/>
<dbReference type="GlyGen" id="Q8IZ73">
    <property type="glycosylation" value="1 site, 1 O-linked glycan (1 site)"/>
</dbReference>
<dbReference type="iPTMnet" id="Q8IZ73"/>
<dbReference type="MetOSite" id="Q8IZ73"/>
<dbReference type="PhosphoSitePlus" id="Q8IZ73"/>
<dbReference type="BioMuta" id="RPUSD2"/>
<dbReference type="DMDM" id="158563848"/>
<dbReference type="jPOST" id="Q8IZ73"/>
<dbReference type="MassIVE" id="Q8IZ73"/>
<dbReference type="PaxDb" id="9606-ENSP00000323288"/>
<dbReference type="PeptideAtlas" id="Q8IZ73"/>
<dbReference type="ProteomicsDB" id="3846"/>
<dbReference type="ProteomicsDB" id="71285">
    <molecule id="Q8IZ73-1"/>
</dbReference>
<dbReference type="Pumba" id="Q8IZ73"/>
<dbReference type="Antibodypedia" id="10143">
    <property type="antibodies" value="146 antibodies from 20 providers"/>
</dbReference>
<dbReference type="DNASU" id="27079"/>
<dbReference type="Ensembl" id="ENST00000315616.12">
    <molecule id="Q8IZ73-1"/>
    <property type="protein sequence ID" value="ENSP00000323288.7"/>
    <property type="gene ID" value="ENSG00000166133.18"/>
</dbReference>
<dbReference type="Ensembl" id="ENST00000559271.1">
    <molecule id="Q8IZ73-2"/>
    <property type="protein sequence ID" value="ENSP00000453036.1"/>
    <property type="gene ID" value="ENSG00000166133.18"/>
</dbReference>
<dbReference type="GeneID" id="27079"/>
<dbReference type="KEGG" id="hsa:27079"/>
<dbReference type="MANE-Select" id="ENST00000315616.12">
    <property type="protein sequence ID" value="ENSP00000323288.7"/>
    <property type="RefSeq nucleotide sequence ID" value="NM_152260.3"/>
    <property type="RefSeq protein sequence ID" value="NP_689473.1"/>
</dbReference>
<dbReference type="UCSC" id="uc001zmd.3">
    <molecule id="Q8IZ73-1"/>
    <property type="organism name" value="human"/>
</dbReference>
<dbReference type="AGR" id="HGNC:24180"/>
<dbReference type="CTD" id="27079"/>
<dbReference type="DisGeNET" id="27079"/>
<dbReference type="GeneCards" id="RPUSD2"/>
<dbReference type="HGNC" id="HGNC:24180">
    <property type="gene designation" value="RPUSD2"/>
</dbReference>
<dbReference type="HPA" id="ENSG00000166133">
    <property type="expression patterns" value="Low tissue specificity"/>
</dbReference>
<dbReference type="MIM" id="617488">
    <property type="type" value="gene"/>
</dbReference>
<dbReference type="neXtProt" id="NX_Q8IZ73"/>
<dbReference type="OpenTargets" id="ENSG00000166133"/>
<dbReference type="PharmGKB" id="PA134866412"/>
<dbReference type="VEuPathDB" id="HostDB:ENSG00000166133"/>
<dbReference type="eggNOG" id="KOG1919">
    <property type="taxonomic scope" value="Eukaryota"/>
</dbReference>
<dbReference type="GeneTree" id="ENSGT00420000029802"/>
<dbReference type="HOGENOM" id="CLU_016902_12_5_1"/>
<dbReference type="InParanoid" id="Q8IZ73"/>
<dbReference type="OMA" id="QTYCKGR"/>
<dbReference type="OrthoDB" id="424794at2759"/>
<dbReference type="PAN-GO" id="Q8IZ73">
    <property type="GO annotations" value="2 GO annotations based on evolutionary models"/>
</dbReference>
<dbReference type="PhylomeDB" id="Q8IZ73"/>
<dbReference type="TreeFam" id="TF323255"/>
<dbReference type="PathwayCommons" id="Q8IZ73"/>
<dbReference type="SignaLink" id="Q8IZ73"/>
<dbReference type="BioGRID-ORCS" id="27079">
    <property type="hits" value="11 hits in 1156 CRISPR screens"/>
</dbReference>
<dbReference type="ChiTaRS" id="RPUSD2">
    <property type="organism name" value="human"/>
</dbReference>
<dbReference type="GenomeRNAi" id="27079"/>
<dbReference type="Pharos" id="Q8IZ73">
    <property type="development level" value="Tdark"/>
</dbReference>
<dbReference type="PRO" id="PR:Q8IZ73"/>
<dbReference type="Proteomes" id="UP000005640">
    <property type="component" value="Chromosome 15"/>
</dbReference>
<dbReference type="RNAct" id="Q8IZ73">
    <property type="molecule type" value="protein"/>
</dbReference>
<dbReference type="Bgee" id="ENSG00000166133">
    <property type="expression patterns" value="Expressed in endometrium epithelium and 133 other cell types or tissues"/>
</dbReference>
<dbReference type="ExpressionAtlas" id="Q8IZ73">
    <property type="expression patterns" value="baseline and differential"/>
</dbReference>
<dbReference type="GO" id="GO:0009982">
    <property type="term" value="F:pseudouridine synthase activity"/>
    <property type="evidence" value="ECO:0000314"/>
    <property type="project" value="UniProtKB"/>
</dbReference>
<dbReference type="GO" id="GO:0003723">
    <property type="term" value="F:RNA binding"/>
    <property type="evidence" value="ECO:0007005"/>
    <property type="project" value="UniProtKB"/>
</dbReference>
<dbReference type="GO" id="GO:0000455">
    <property type="term" value="P:enzyme-directed rRNA pseudouridine synthesis"/>
    <property type="evidence" value="ECO:0000318"/>
    <property type="project" value="GO_Central"/>
</dbReference>
<dbReference type="GO" id="GO:0006397">
    <property type="term" value="P:mRNA processing"/>
    <property type="evidence" value="ECO:0007669"/>
    <property type="project" value="UniProtKB-KW"/>
</dbReference>
<dbReference type="GO" id="GO:1990481">
    <property type="term" value="P:mRNA pseudouridine synthesis"/>
    <property type="evidence" value="ECO:0000314"/>
    <property type="project" value="UniProtKB"/>
</dbReference>
<dbReference type="CDD" id="cd02557">
    <property type="entry name" value="PseudoU_synth_ScRIB2"/>
    <property type="match status" value="1"/>
</dbReference>
<dbReference type="FunFam" id="3.30.2350.10:FF:000010">
    <property type="entry name" value="RNA pseudouridine synthase domain-containing 2"/>
    <property type="match status" value="1"/>
</dbReference>
<dbReference type="Gene3D" id="3.30.2350.10">
    <property type="entry name" value="Pseudouridine synthase"/>
    <property type="match status" value="1"/>
</dbReference>
<dbReference type="InterPro" id="IPR020103">
    <property type="entry name" value="PsdUridine_synth_cat_dom_sf"/>
</dbReference>
<dbReference type="InterPro" id="IPR006224">
    <property type="entry name" value="PsdUridine_synth_RluA-like_CS"/>
</dbReference>
<dbReference type="InterPro" id="IPR006225">
    <property type="entry name" value="PsdUridine_synth_RluC/D"/>
</dbReference>
<dbReference type="InterPro" id="IPR006145">
    <property type="entry name" value="PsdUridine_synth_RsuA/RluA"/>
</dbReference>
<dbReference type="InterPro" id="IPR050188">
    <property type="entry name" value="RluA_PseudoU_synthase"/>
</dbReference>
<dbReference type="NCBIfam" id="TIGR00005">
    <property type="entry name" value="rluA_subfam"/>
    <property type="match status" value="1"/>
</dbReference>
<dbReference type="PANTHER" id="PTHR21600">
    <property type="entry name" value="MITOCHONDRIAL RNA PSEUDOURIDINE SYNTHASE"/>
    <property type="match status" value="1"/>
</dbReference>
<dbReference type="PANTHER" id="PTHR21600:SF40">
    <property type="entry name" value="PSEUDOURIDYLATE SYNTHASE RPUSD2"/>
    <property type="match status" value="1"/>
</dbReference>
<dbReference type="Pfam" id="PF00849">
    <property type="entry name" value="PseudoU_synth_2"/>
    <property type="match status" value="1"/>
</dbReference>
<dbReference type="SUPFAM" id="SSF55120">
    <property type="entry name" value="Pseudouridine synthase"/>
    <property type="match status" value="1"/>
</dbReference>
<dbReference type="PROSITE" id="PS01129">
    <property type="entry name" value="PSI_RLU"/>
    <property type="match status" value="1"/>
</dbReference>
<accession>Q8IZ73</accession>
<accession>B4DDD1</accession>
<accession>Q7L989</accession>
<accession>Q92939</accession>
<accession>Q96IA7</accession>
<accession>Q96N50</accession>
<gene>
    <name evidence="7 9" type="primary">RPUSD2</name>
    <name evidence="9" type="synonym">C15orf19</name>
</gene>
<sequence length="545" mass="61311">MWLDRRGWLRVLGHWRYDLRRPSFTRTWSGDKGPMAETVSTQVGTEGGLRASHQQNGDAGGDAKVELSPGPPKPAGREVEPAPVGGEHPSAAAPGPGKHKKRRGATRERVVPPPKKRRTGVSFGDEHFAETSYYFEGGLRKVRPYYFDFRTYCKGRWVGHSLLHVFSTEFRAQPLAYYEAAVRAGRLQLNEKPVQDLNIVLKDNDFLRNTVHRHEPPVTAEPIRLLAENEDVVVVDKPSSIPVHPCGRFRHNTVIFILGKEHQLKELHPLHRLDRLTSGVLMFAKTAAVSERIHEQVRDRQLEKEYVCRVEGEFPTEEVTCKEPILVVSYKVGVCRVDPRGKPCETVFQRLSYNGQSSVVRCRPLTGRTHQIRVHLQFLGHPILNDPIYNSVAWGPSRGRGGYIPKTNEELLRDLVAEHQAKQSLDVLDLCEGDLSPGLTDSTAPSSELGKDDLEELAAAAQKMEEVAEAAPQELDTIALASEKAVETDVMNQETDPLCAECRLVRQDPLPQDLVMFLHALRYKGPGFEYFSPMPAWAQDDWQKD</sequence>